<reference key="1">
    <citation type="journal article" date="1992" name="Biochimie">
        <title>Isolation and sequence of the murine Fgf6 cDNA.</title>
        <authorList>
            <person name="Ollendorf V."/>
            <person name="Rosnet O."/>
            <person name="Marics I."/>
            <person name="Birnbaum D."/>
            <person name="Delapeyriere O."/>
        </authorList>
    </citation>
    <scope>NUCLEOTIDE SEQUENCE [GENOMIC DNA / MRNA]</scope>
    <source>
        <tissue>Embryo</tissue>
    </source>
</reference>
<reference key="2">
    <citation type="journal article" date="1990" name="Oncogene">
        <title>Structure, chromosome mapping and expression of the murine Fgf-6 gene.</title>
        <authorList>
            <person name="de Lapeyriere O."/>
            <person name="Rosnet O."/>
            <person name="Benharroch D."/>
            <person name="Raybaud F."/>
            <person name="Marchetto S."/>
            <person name="Planche J."/>
            <person name="Galland F."/>
            <person name="Mattei M.-G."/>
            <person name="Copeland N.G."/>
            <person name="Jenkins N.A."/>
            <person name="Coulier F."/>
            <person name="Birnbaum D."/>
        </authorList>
    </citation>
    <scope>NUCLEOTIDE SEQUENCE [GENOMIC DNA] OF 11-208</scope>
</reference>
<organism>
    <name type="scientific">Mus musculus</name>
    <name type="common">Mouse</name>
    <dbReference type="NCBI Taxonomy" id="10090"/>
    <lineage>
        <taxon>Eukaryota</taxon>
        <taxon>Metazoa</taxon>
        <taxon>Chordata</taxon>
        <taxon>Craniata</taxon>
        <taxon>Vertebrata</taxon>
        <taxon>Euteleostomi</taxon>
        <taxon>Mammalia</taxon>
        <taxon>Eutheria</taxon>
        <taxon>Euarchontoglires</taxon>
        <taxon>Glires</taxon>
        <taxon>Rodentia</taxon>
        <taxon>Myomorpha</taxon>
        <taxon>Muroidea</taxon>
        <taxon>Muridae</taxon>
        <taxon>Murinae</taxon>
        <taxon>Mus</taxon>
        <taxon>Mus</taxon>
    </lineage>
</organism>
<keyword id="KW-0037">Angiogenesis</keyword>
<keyword id="KW-0217">Developmental protein</keyword>
<keyword id="KW-0221">Differentiation</keyword>
<keyword id="KW-1015">Disulfide bond</keyword>
<keyword id="KW-0325">Glycoprotein</keyword>
<keyword id="KW-0339">Growth factor</keyword>
<keyword id="KW-0497">Mitogen</keyword>
<keyword id="KW-0656">Proto-oncogene</keyword>
<keyword id="KW-1185">Reference proteome</keyword>
<keyword id="KW-0964">Secreted</keyword>
<keyword id="KW-0732">Signal</keyword>
<dbReference type="EMBL" id="M92415">
    <property type="protein sequence ID" value="AAA62260.1"/>
    <property type="molecule type" value="Genomic_DNA"/>
</dbReference>
<dbReference type="EMBL" id="M92416">
    <property type="protein sequence ID" value="AAA62261.1"/>
    <property type="molecule type" value="mRNA"/>
</dbReference>
<dbReference type="EMBL" id="X51552">
    <property type="protein sequence ID" value="CAA35925.1"/>
    <property type="molecule type" value="Genomic_DNA"/>
</dbReference>
<dbReference type="CCDS" id="CCDS20561.1"/>
<dbReference type="PIR" id="S14192">
    <property type="entry name" value="S14192"/>
</dbReference>
<dbReference type="RefSeq" id="NP_034334.1">
    <property type="nucleotide sequence ID" value="NM_010204.1"/>
</dbReference>
<dbReference type="SMR" id="P21658"/>
<dbReference type="FunCoup" id="P21658">
    <property type="interactions" value="905"/>
</dbReference>
<dbReference type="STRING" id="10090.ENSMUSP00000000187"/>
<dbReference type="GlyCosmos" id="P21658">
    <property type="glycosylation" value="1 site, No reported glycans"/>
</dbReference>
<dbReference type="GlyGen" id="P21658">
    <property type="glycosylation" value="1 site"/>
</dbReference>
<dbReference type="iPTMnet" id="P21658"/>
<dbReference type="PhosphoSitePlus" id="P21658"/>
<dbReference type="PaxDb" id="10090-ENSMUSP00000000187"/>
<dbReference type="Antibodypedia" id="41814">
    <property type="antibodies" value="197 antibodies from 22 providers"/>
</dbReference>
<dbReference type="DNASU" id="14177"/>
<dbReference type="Ensembl" id="ENSMUST00000000187.7">
    <property type="protein sequence ID" value="ENSMUSP00000000187.6"/>
    <property type="gene ID" value="ENSMUSG00000000183.7"/>
</dbReference>
<dbReference type="GeneID" id="14177"/>
<dbReference type="KEGG" id="mmu:14177"/>
<dbReference type="UCSC" id="uc009dvo.1">
    <property type="organism name" value="mouse"/>
</dbReference>
<dbReference type="AGR" id="MGI:95520"/>
<dbReference type="CTD" id="2251"/>
<dbReference type="MGI" id="MGI:95520">
    <property type="gene designation" value="Fgf6"/>
</dbReference>
<dbReference type="VEuPathDB" id="HostDB:ENSMUSG00000000183"/>
<dbReference type="eggNOG" id="KOG3885">
    <property type="taxonomic scope" value="Eukaryota"/>
</dbReference>
<dbReference type="GeneTree" id="ENSGT00940000157821"/>
<dbReference type="HOGENOM" id="CLU_081609_4_1_1"/>
<dbReference type="InParanoid" id="P21658"/>
<dbReference type="OMA" id="RISGAHN"/>
<dbReference type="OrthoDB" id="5960247at2759"/>
<dbReference type="PhylomeDB" id="P21658"/>
<dbReference type="TreeFam" id="TF317805"/>
<dbReference type="Reactome" id="R-MMU-109704">
    <property type="pathway name" value="PI3K Cascade"/>
</dbReference>
<dbReference type="Reactome" id="R-MMU-1257604">
    <property type="pathway name" value="PIP3 activates AKT signaling"/>
</dbReference>
<dbReference type="Reactome" id="R-MMU-190322">
    <property type="pathway name" value="FGFR4 ligand binding and activation"/>
</dbReference>
<dbReference type="Reactome" id="R-MMU-190373">
    <property type="pathway name" value="FGFR1c ligand binding and activation"/>
</dbReference>
<dbReference type="Reactome" id="R-MMU-190375">
    <property type="pathway name" value="FGFR2c ligand binding and activation"/>
</dbReference>
<dbReference type="Reactome" id="R-MMU-5654219">
    <property type="pathway name" value="Phospholipase C-mediated cascade: FGFR1"/>
</dbReference>
<dbReference type="Reactome" id="R-MMU-5654221">
    <property type="pathway name" value="Phospholipase C-mediated cascade, FGFR2"/>
</dbReference>
<dbReference type="Reactome" id="R-MMU-5654228">
    <property type="pathway name" value="Phospholipase C-mediated cascade, FGFR4"/>
</dbReference>
<dbReference type="Reactome" id="R-MMU-5654687">
    <property type="pathway name" value="Downstream signaling of activated FGFR1"/>
</dbReference>
<dbReference type="Reactome" id="R-MMU-5654688">
    <property type="pathway name" value="SHC-mediated cascade:FGFR1"/>
</dbReference>
<dbReference type="Reactome" id="R-MMU-5654689">
    <property type="pathway name" value="PI-3K cascade:FGFR1"/>
</dbReference>
<dbReference type="Reactome" id="R-MMU-5654693">
    <property type="pathway name" value="FRS-mediated FGFR1 signaling"/>
</dbReference>
<dbReference type="Reactome" id="R-MMU-5654695">
    <property type="pathway name" value="PI-3K cascade:FGFR2"/>
</dbReference>
<dbReference type="Reactome" id="R-MMU-5654699">
    <property type="pathway name" value="SHC-mediated cascade:FGFR2"/>
</dbReference>
<dbReference type="Reactome" id="R-MMU-5654700">
    <property type="pathway name" value="FRS-mediated FGFR2 signaling"/>
</dbReference>
<dbReference type="Reactome" id="R-MMU-5654712">
    <property type="pathway name" value="FRS-mediated FGFR4 signaling"/>
</dbReference>
<dbReference type="Reactome" id="R-MMU-5654719">
    <property type="pathway name" value="SHC-mediated cascade:FGFR4"/>
</dbReference>
<dbReference type="Reactome" id="R-MMU-5654720">
    <property type="pathway name" value="PI-3K cascade:FGFR4"/>
</dbReference>
<dbReference type="Reactome" id="R-MMU-5654726">
    <property type="pathway name" value="Negative regulation of FGFR1 signaling"/>
</dbReference>
<dbReference type="Reactome" id="R-MMU-5654727">
    <property type="pathway name" value="Negative regulation of FGFR2 signaling"/>
</dbReference>
<dbReference type="Reactome" id="R-MMU-5654733">
    <property type="pathway name" value="Negative regulation of FGFR4 signaling"/>
</dbReference>
<dbReference type="Reactome" id="R-MMU-5673001">
    <property type="pathway name" value="RAF/MAP kinase cascade"/>
</dbReference>
<dbReference type="Reactome" id="R-MMU-6811558">
    <property type="pathway name" value="PI5P, PP2A and IER3 Regulate PI3K/AKT Signaling"/>
</dbReference>
<dbReference type="BioGRID-ORCS" id="14177">
    <property type="hits" value="0 hits in 78 CRISPR screens"/>
</dbReference>
<dbReference type="PRO" id="PR:P21658"/>
<dbReference type="Proteomes" id="UP000000589">
    <property type="component" value="Chromosome 6"/>
</dbReference>
<dbReference type="RNAct" id="P21658">
    <property type="molecule type" value="protein"/>
</dbReference>
<dbReference type="Bgee" id="ENSMUSG00000000183">
    <property type="expression patterns" value="Expressed in mesenchyme of tongue and 43 other cell types or tissues"/>
</dbReference>
<dbReference type="GO" id="GO:0005576">
    <property type="term" value="C:extracellular region"/>
    <property type="evidence" value="ECO:0007669"/>
    <property type="project" value="UniProtKB-SubCell"/>
</dbReference>
<dbReference type="GO" id="GO:0042383">
    <property type="term" value="C:sarcolemma"/>
    <property type="evidence" value="ECO:0007669"/>
    <property type="project" value="Ensembl"/>
</dbReference>
<dbReference type="GO" id="GO:0008083">
    <property type="term" value="F:growth factor activity"/>
    <property type="evidence" value="ECO:0007669"/>
    <property type="project" value="UniProtKB-KW"/>
</dbReference>
<dbReference type="GO" id="GO:0001525">
    <property type="term" value="P:angiogenesis"/>
    <property type="evidence" value="ECO:0007669"/>
    <property type="project" value="UniProtKB-KW"/>
</dbReference>
<dbReference type="GO" id="GO:0001502">
    <property type="term" value="P:cartilage condensation"/>
    <property type="evidence" value="ECO:0000316"/>
    <property type="project" value="MGI"/>
</dbReference>
<dbReference type="GO" id="GO:0008543">
    <property type="term" value="P:fibroblast growth factor receptor signaling pathway"/>
    <property type="evidence" value="ECO:0000266"/>
    <property type="project" value="MGI"/>
</dbReference>
<dbReference type="GO" id="GO:0045445">
    <property type="term" value="P:myoblast differentiation"/>
    <property type="evidence" value="ECO:0000314"/>
    <property type="project" value="MGI"/>
</dbReference>
<dbReference type="GO" id="GO:0051781">
    <property type="term" value="P:positive regulation of cell division"/>
    <property type="evidence" value="ECO:0007669"/>
    <property type="project" value="UniProtKB-KW"/>
</dbReference>
<dbReference type="GO" id="GO:0008284">
    <property type="term" value="P:positive regulation of cell population proliferation"/>
    <property type="evidence" value="ECO:0000266"/>
    <property type="project" value="MGI"/>
</dbReference>
<dbReference type="CDD" id="cd23318">
    <property type="entry name" value="beta-trefoil_FGF6"/>
    <property type="match status" value="1"/>
</dbReference>
<dbReference type="FunFam" id="2.80.10.50:FF:000033">
    <property type="entry name" value="Fibroblast growth factor"/>
    <property type="match status" value="1"/>
</dbReference>
<dbReference type="Gene3D" id="2.80.10.50">
    <property type="match status" value="1"/>
</dbReference>
<dbReference type="InterPro" id="IPR002209">
    <property type="entry name" value="Fibroblast_GF_fam"/>
</dbReference>
<dbReference type="InterPro" id="IPR008996">
    <property type="entry name" value="IL1/FGF"/>
</dbReference>
<dbReference type="PANTHER" id="PTHR11486">
    <property type="entry name" value="FIBROBLAST GROWTH FACTOR"/>
    <property type="match status" value="1"/>
</dbReference>
<dbReference type="Pfam" id="PF00167">
    <property type="entry name" value="FGF"/>
    <property type="match status" value="1"/>
</dbReference>
<dbReference type="PRINTS" id="PR00263">
    <property type="entry name" value="HBGFFGF"/>
</dbReference>
<dbReference type="PRINTS" id="PR00262">
    <property type="entry name" value="IL1HBGF"/>
</dbReference>
<dbReference type="SMART" id="SM00442">
    <property type="entry name" value="FGF"/>
    <property type="match status" value="1"/>
</dbReference>
<dbReference type="SUPFAM" id="SSF50353">
    <property type="entry name" value="Cytokine"/>
    <property type="match status" value="1"/>
</dbReference>
<dbReference type="PROSITE" id="PS00247">
    <property type="entry name" value="HBGF_FGF"/>
    <property type="match status" value="1"/>
</dbReference>
<proteinExistence type="evidence at transcript level"/>
<sequence length="208" mass="22798">MALGQRLFITMSRGAGRVQGTLQALVFLGVLVGMVVPSPAGARANGTLLDSRGWGTLLSRSRAGLAGEISGVNWESGYLVGIKRQRRLYCNVGIGFHLQVPPDGRISGTHEENPYSLLEISTVERGVVSLFGVKSALFIAMNSKGRLYTTPSFHDECKFRETLLPNNYNAYESDLYRGTYIALSKYGRVKRGSKVSPIMTVTHFLPRI</sequence>
<protein>
    <recommendedName>
        <fullName>Fibroblast growth factor 6</fullName>
        <shortName>FGF-6</shortName>
    </recommendedName>
    <alternativeName>
        <fullName>Heparin secretory-transforming protein 2</fullName>
        <shortName>HST-2</shortName>
        <shortName>HSTF-2</shortName>
    </alternativeName>
    <alternativeName>
        <fullName>Heparin-binding growth factor 6</fullName>
        <shortName>HBGF-6</shortName>
    </alternativeName>
</protein>
<evidence type="ECO:0000250" key="1"/>
<evidence type="ECO:0000255" key="2"/>
<evidence type="ECO:0000305" key="3"/>
<accession>P21658</accession>
<name>FGF6_MOUSE</name>
<comment type="function">
    <text evidence="1">Plays an important role in the regulation of cell proliferation, cell differentiation, angiogenesis and myogenesis, and is required for normal muscle regeneration.</text>
</comment>
<comment type="subunit">
    <text evidence="1">Interacts with FGFR1, FGFR2 and FGFR4. Affinity between fibroblast growth factors (FGFs) and their receptors is increased by heparan sulfate glycosaminoglycans that function as coreceptors (By similarity).</text>
</comment>
<comment type="subcellular location">
    <subcellularLocation>
        <location>Secreted</location>
        <location>Extracellular space</location>
    </subcellularLocation>
</comment>
<comment type="tissue specificity">
    <text>Embryos, adult muscles and adult testis.</text>
</comment>
<comment type="similarity">
    <text evidence="3">Belongs to the heparin-binding growth factors family.</text>
</comment>
<feature type="signal peptide" evidence="2">
    <location>
        <begin position="1"/>
        <end position="37"/>
    </location>
</feature>
<feature type="chain" id="PRO_0000008962" description="Fibroblast growth factor 6">
    <location>
        <begin position="38"/>
        <end position="208"/>
    </location>
</feature>
<feature type="glycosylation site" description="N-linked (GlcNAc...) asparagine" evidence="2">
    <location>
        <position position="45"/>
    </location>
</feature>
<feature type="disulfide bond" evidence="2">
    <location>
        <begin position="90"/>
        <end position="157"/>
    </location>
</feature>
<gene>
    <name type="primary">Fgf6</name>
    <name type="synonym">Fgf-6</name>
    <name type="synonym">Hstf2</name>
</gene>